<comment type="function">
    <text evidence="1 2">Reductase component of a two-component system that degrades 2,4,5-trichlorophenol. TftC provides the FADH(2) required by TftD. TftD oxidizes 2,4,5-trichlorophenol (2,4,5-TCP) to 2,5-dichloro-p-benzoquinone, which is chemically reduced to 2,5-dichloro-p-hydroquinone (2,5-DiCHQ). Then, TftD oxidizes the latter to 5-chloro-2-hydroxy-p-benzoquinone.</text>
</comment>
<comment type="catalytic activity">
    <reaction evidence="1 2">
        <text>FADH2 + NAD(+) = FAD + NADH + 2 H(+)</text>
        <dbReference type="Rhea" id="RHEA:30147"/>
        <dbReference type="ChEBI" id="CHEBI:15378"/>
        <dbReference type="ChEBI" id="CHEBI:57540"/>
        <dbReference type="ChEBI" id="CHEBI:57692"/>
        <dbReference type="ChEBI" id="CHEBI:57945"/>
        <dbReference type="ChEBI" id="CHEBI:58307"/>
        <dbReference type="EC" id="1.5.1.37"/>
    </reaction>
</comment>
<comment type="biophysicochemical properties">
    <kinetics>
        <KM evidence="1 2">10.3 uM for FMN (with fixed NADH concentration at 300 uM)</KM>
        <KM evidence="1 2">2 uM for FAD</KM>
        <KM evidence="1 2">4.8 uM for FAD (with fixed NADH concentration at 300 uM)</KM>
        <KM evidence="1 2">45.3 uM for NADH</KM>
        <KM evidence="1 2">40.1 uM for NADH (with fixed FAD concentration at 18 uM)</KM>
        <KM evidence="1 2">164 uM for NADH (with fixed FMN concentration at 20 uM)</KM>
        <Vmax evidence="1 2">120.0 umol/min/mg enzyme</Vmax>
    </kinetics>
</comment>
<comment type="pathway">
    <text>Xenobiotic degradation.</text>
</comment>
<comment type="subunit">
    <text evidence="2">Homodimer. The chlorophenol-4-monooxygenase is composed of an oxygenase component TftD and a reductase component TftC.</text>
</comment>
<comment type="similarity">
    <text evidence="3">Belongs to the non-flavoprotein flavin reductase family.</text>
</comment>
<name>TFTC_BURCE</name>
<keyword id="KW-0002">3D-structure</keyword>
<keyword id="KW-0058">Aromatic hydrocarbons catabolism</keyword>
<keyword id="KW-0274">FAD</keyword>
<keyword id="KW-0285">Flavoprotein</keyword>
<keyword id="KW-0503">Monooxygenase</keyword>
<keyword id="KW-0520">NAD</keyword>
<keyword id="KW-0547">Nucleotide-binding</keyword>
<keyword id="KW-0560">Oxidoreductase</keyword>
<accession>O87008</accession>
<organism>
    <name type="scientific">Burkholderia cepacia</name>
    <name type="common">Pseudomonas cepacia</name>
    <dbReference type="NCBI Taxonomy" id="292"/>
    <lineage>
        <taxon>Bacteria</taxon>
        <taxon>Pseudomonadati</taxon>
        <taxon>Pseudomonadota</taxon>
        <taxon>Betaproteobacteria</taxon>
        <taxon>Burkholderiales</taxon>
        <taxon>Burkholderiaceae</taxon>
        <taxon>Burkholderia</taxon>
        <taxon>Burkholderia cepacia complex</taxon>
    </lineage>
</organism>
<reference key="1">
    <citation type="journal article" date="1998" name="Appl. Environ. Microbiol.">
        <title>Genes for 2,4,5-trichlorophenoxyacetic acid metabolism in Burkholderia cepacia AC1100: characterization of the tftC and tftD genes and locations of the tft operons on multiple replicons.</title>
        <authorList>
            <person name="Hubner A."/>
            <person name="Danganan C.E."/>
            <person name="Xun L."/>
            <person name="Chakrabarty A.M."/>
            <person name="Hendrickson W."/>
        </authorList>
    </citation>
    <scope>NUCLEOTIDE SEQUENCE [GENOMIC DNA]</scope>
    <source>
        <strain>AC1100</strain>
    </source>
</reference>
<reference key="2">
    <citation type="journal article" date="2003" name="J. Bacteriol.">
        <title>Characterization of chlorophenol 4-monooxygenase (TftD) and NADH:flavin adenine dinucleotide oxidoreductase (TftC) of Burkholderia cepacia AC1100.</title>
        <authorList>
            <person name="Gisi M.R."/>
            <person name="Xun L."/>
        </authorList>
    </citation>
    <scope>FUNCTION</scope>
    <scope>CATALYTIC ACTIVITY</scope>
    <scope>BIOPHYSICOCHEMICAL PROPERTIES</scope>
    <source>
        <strain>AC1100</strain>
    </source>
</reference>
<reference key="3">
    <citation type="journal article" date="2010" name="J. Biol. Chem.">
        <title>Characterization of chlorophenol 4-monooxygenase (TftD) and NADH:FAD oxidoreductase (TftC) of Burkholderia cepacia AC1100.</title>
        <authorList>
            <person name="Webb B.N."/>
            <person name="Ballinger J.W."/>
            <person name="Kim E."/>
            <person name="Belchik S.M."/>
            <person name="Lam K.S."/>
            <person name="Youn B."/>
            <person name="Nissen M.S."/>
            <person name="Xun L."/>
            <person name="Kang C."/>
        </authorList>
    </citation>
    <scope>X-RAY CRYSTALLOGRAPHY (2.00 ANGSTROMS) IN COMPLEX WITH FAD AND NAD</scope>
    <scope>FUNCTION</scope>
    <scope>CATALYTIC ACTIVITY</scope>
    <scope>SUBUNIT</scope>
    <scope>BIOPHYSICOCHEMICAL PROPERTIES</scope>
</reference>
<sequence length="179" mass="19028">MHAGEAVQQLKKAFETVASFDFRDALSKASTPVTVVATNGPFGLAGLTCSAVCSVCDRPPTVLLCINRKSYAAGIIKSNGVLSVNWLAAGQAVISQTFAGVGSVPMEERFADKGWQTIATGAPYRMDAAVSFDCTIANIVDVGSHSVIFAEVVARNHAEECTPLIYHRRQYATTRSLAE</sequence>
<dbReference type="EC" id="1.5.1.37"/>
<dbReference type="EMBL" id="U83405">
    <property type="protein sequence ID" value="AAC23547.1"/>
    <property type="molecule type" value="Genomic_DNA"/>
</dbReference>
<dbReference type="PDB" id="3K86">
    <property type="method" value="X-ray"/>
    <property type="resolution" value="2.00 A"/>
    <property type="chains" value="A/B=1-179"/>
</dbReference>
<dbReference type="PDB" id="3K87">
    <property type="method" value="X-ray"/>
    <property type="resolution" value="2.00 A"/>
    <property type="chains" value="A/B=1-179"/>
</dbReference>
<dbReference type="PDB" id="3K88">
    <property type="method" value="X-ray"/>
    <property type="resolution" value="2.00 A"/>
    <property type="chains" value="A/B=1-179"/>
</dbReference>
<dbReference type="PDBsum" id="3K86"/>
<dbReference type="PDBsum" id="3K87"/>
<dbReference type="PDBsum" id="3K88"/>
<dbReference type="SMR" id="O87008"/>
<dbReference type="KEGG" id="ag:AAC23547"/>
<dbReference type="BioCyc" id="MetaCyc:MONOMER-14673"/>
<dbReference type="BRENDA" id="1.5.1.37">
    <property type="organism ID" value="1028"/>
</dbReference>
<dbReference type="SABIO-RK" id="O87008"/>
<dbReference type="EvolutionaryTrace" id="O87008"/>
<dbReference type="GO" id="GO:0010181">
    <property type="term" value="F:FMN binding"/>
    <property type="evidence" value="ECO:0007669"/>
    <property type="project" value="InterPro"/>
</dbReference>
<dbReference type="GO" id="GO:0004497">
    <property type="term" value="F:monooxygenase activity"/>
    <property type="evidence" value="ECO:0007669"/>
    <property type="project" value="UniProtKB-KW"/>
</dbReference>
<dbReference type="GO" id="GO:0016646">
    <property type="term" value="F:oxidoreductase activity, acting on the CH-NH group of donors, NAD or NADP as acceptor"/>
    <property type="evidence" value="ECO:0000314"/>
    <property type="project" value="UniProtKB"/>
</dbReference>
<dbReference type="GO" id="GO:0042803">
    <property type="term" value="F:protein homodimerization activity"/>
    <property type="evidence" value="ECO:0000314"/>
    <property type="project" value="UniProtKB"/>
</dbReference>
<dbReference type="GO" id="GO:0042602">
    <property type="term" value="F:riboflavin reductase (NADPH) activity"/>
    <property type="evidence" value="ECO:0007669"/>
    <property type="project" value="TreeGrafter"/>
</dbReference>
<dbReference type="GO" id="GO:0006208">
    <property type="term" value="P:pyrimidine nucleobase catabolic process"/>
    <property type="evidence" value="ECO:0007669"/>
    <property type="project" value="TreeGrafter"/>
</dbReference>
<dbReference type="Gene3D" id="2.30.110.10">
    <property type="entry name" value="Electron Transport, Fmn-binding Protein, Chain A"/>
    <property type="match status" value="1"/>
</dbReference>
<dbReference type="InterPro" id="IPR002563">
    <property type="entry name" value="Flavin_Rdtase-like_dom"/>
</dbReference>
<dbReference type="InterPro" id="IPR050268">
    <property type="entry name" value="NADH-dep_flavin_reductase"/>
</dbReference>
<dbReference type="InterPro" id="IPR012349">
    <property type="entry name" value="Split_barrel_FMN-bd"/>
</dbReference>
<dbReference type="PANTHER" id="PTHR30466">
    <property type="entry name" value="FLAVIN REDUCTASE"/>
    <property type="match status" value="1"/>
</dbReference>
<dbReference type="PANTHER" id="PTHR30466:SF1">
    <property type="entry name" value="FMN REDUCTASE (NADH) RUTF"/>
    <property type="match status" value="1"/>
</dbReference>
<dbReference type="Pfam" id="PF01613">
    <property type="entry name" value="Flavin_Reduct"/>
    <property type="match status" value="1"/>
</dbReference>
<dbReference type="SMART" id="SM00903">
    <property type="entry name" value="Flavin_Reduct"/>
    <property type="match status" value="1"/>
</dbReference>
<dbReference type="SUPFAM" id="SSF50475">
    <property type="entry name" value="FMN-binding split barrel"/>
    <property type="match status" value="1"/>
</dbReference>
<proteinExistence type="evidence at protein level"/>
<protein>
    <recommendedName>
        <fullName>NADH:FAD oxidoreductase</fullName>
        <ecNumber>1.5.1.37</ecNumber>
    </recommendedName>
    <alternativeName>
        <fullName>Chlorophenol-4-monooxygenase component 1</fullName>
    </alternativeName>
    <alternativeName>
        <fullName>Two component enzyme C</fullName>
    </alternativeName>
</protein>
<gene>
    <name type="primary">tftC</name>
</gene>
<evidence type="ECO:0000269" key="1">
    <source>
    </source>
</evidence>
<evidence type="ECO:0000269" key="2">
    <source>
    </source>
</evidence>
<evidence type="ECO:0000305" key="3"/>
<evidence type="ECO:0007829" key="4">
    <source>
        <dbReference type="PDB" id="3K86"/>
    </source>
</evidence>
<feature type="chain" id="PRO_0000418739" description="NADH:FAD oxidoreductase">
    <location>
        <begin position="1"/>
        <end position="179"/>
    </location>
</feature>
<feature type="binding site" evidence="2">
    <location>
        <begin position="48"/>
        <end position="51"/>
    </location>
    <ligand>
        <name>FAD</name>
        <dbReference type="ChEBI" id="CHEBI:57692"/>
    </ligand>
</feature>
<feature type="binding site" evidence="2">
    <location>
        <begin position="54"/>
        <end position="57"/>
    </location>
    <ligand>
        <name>NAD(+)</name>
        <dbReference type="ChEBI" id="CHEBI:57540"/>
    </ligand>
</feature>
<feature type="binding site" evidence="2">
    <location>
        <begin position="65"/>
        <end position="71"/>
    </location>
    <ligand>
        <name>FAD</name>
        <dbReference type="ChEBI" id="CHEBI:57692"/>
    </ligand>
</feature>
<feature type="binding site" evidence="2">
    <location>
        <position position="99"/>
    </location>
    <ligand>
        <name>FAD</name>
        <dbReference type="ChEBI" id="CHEBI:57692"/>
    </ligand>
</feature>
<feature type="binding site" evidence="2">
    <location>
        <begin position="104"/>
        <end position="109"/>
    </location>
    <ligand>
        <name>FAD</name>
        <dbReference type="ChEBI" id="CHEBI:57692"/>
    </ligand>
</feature>
<feature type="binding site" evidence="2">
    <location>
        <position position="144"/>
    </location>
    <ligand>
        <name>FAD</name>
        <dbReference type="ChEBI" id="CHEBI:57692"/>
    </ligand>
</feature>
<feature type="binding site" evidence="2">
    <location>
        <position position="145"/>
    </location>
    <ligand>
        <name>NAD(+)</name>
        <dbReference type="ChEBI" id="CHEBI:57540"/>
    </ligand>
</feature>
<feature type="binding site" evidence="2">
    <location>
        <begin position="166"/>
        <end position="169"/>
    </location>
    <ligand>
        <name>NAD(+)</name>
        <dbReference type="ChEBI" id="CHEBI:57540"/>
    </ligand>
</feature>
<feature type="binding site" evidence="2">
    <location>
        <position position="166"/>
    </location>
    <ligand>
        <name>FAD</name>
        <dbReference type="ChEBI" id="CHEBI:57692"/>
    </ligand>
</feature>
<feature type="helix" evidence="4">
    <location>
        <begin position="19"/>
        <end position="26"/>
    </location>
</feature>
<feature type="strand" evidence="4">
    <location>
        <begin position="29"/>
        <end position="32"/>
    </location>
</feature>
<feature type="strand" evidence="4">
    <location>
        <begin position="34"/>
        <end position="38"/>
    </location>
</feature>
<feature type="strand" evidence="4">
    <location>
        <begin position="45"/>
        <end position="49"/>
    </location>
</feature>
<feature type="strand" evidence="4">
    <location>
        <begin position="52"/>
        <end position="56"/>
    </location>
</feature>
<feature type="turn" evidence="4">
    <location>
        <begin position="57"/>
        <end position="60"/>
    </location>
</feature>
<feature type="strand" evidence="4">
    <location>
        <begin position="61"/>
        <end position="67"/>
    </location>
</feature>
<feature type="helix" evidence="4">
    <location>
        <begin position="71"/>
        <end position="79"/>
    </location>
</feature>
<feature type="strand" evidence="4">
    <location>
        <begin position="81"/>
        <end position="86"/>
    </location>
</feature>
<feature type="helix" evidence="4">
    <location>
        <begin position="89"/>
        <end position="91"/>
    </location>
</feature>
<feature type="helix" evidence="4">
    <location>
        <begin position="92"/>
        <end position="98"/>
    </location>
</feature>
<feature type="helix" evidence="4">
    <location>
        <begin position="101"/>
        <end position="103"/>
    </location>
</feature>
<feature type="helix" evidence="4">
    <location>
        <begin position="106"/>
        <end position="108"/>
    </location>
</feature>
<feature type="strand" evidence="4">
    <location>
        <begin position="119"/>
        <end position="122"/>
    </location>
</feature>
<feature type="strand" evidence="4">
    <location>
        <begin position="128"/>
        <end position="142"/>
    </location>
</feature>
<feature type="strand" evidence="4">
    <location>
        <begin position="145"/>
        <end position="156"/>
    </location>
</feature>
<feature type="strand" evidence="4">
    <location>
        <begin position="165"/>
        <end position="167"/>
    </location>
</feature>
<feature type="strand" evidence="4">
    <location>
        <begin position="170"/>
        <end position="175"/>
    </location>
</feature>